<evidence type="ECO:0000255" key="1">
    <source>
        <dbReference type="HAMAP-Rule" id="MF_00014"/>
    </source>
</evidence>
<protein>
    <recommendedName>
        <fullName evidence="1">Ribosome maturation factor RimM</fullName>
    </recommendedName>
</protein>
<sequence length="183" mass="20585">MMSKQLAAQVPAEPVVLGKMGSSYGIRGWLRVFSSTEDAESIFDYLPWFIQKAGQWQQVQLESWKHHNQDLIIKLKGVDDRDAANLLTNCEIVVDSSQLPALEEGDYYWKDLMGCQVVTAEGYDLGKVIDMMETGSNDVLVIKANLKDAFGIKERLVPFLDGQVIKKVDLATRTIEVDWDPGF</sequence>
<gene>
    <name evidence="1" type="primary">rimM</name>
    <name type="ordered locus">SCH_2676</name>
</gene>
<keyword id="KW-0143">Chaperone</keyword>
<keyword id="KW-0963">Cytoplasm</keyword>
<keyword id="KW-0690">Ribosome biogenesis</keyword>
<keyword id="KW-0698">rRNA processing</keyword>
<reference key="1">
    <citation type="journal article" date="2005" name="Nucleic Acids Res.">
        <title>The genome sequence of Salmonella enterica serovar Choleraesuis, a highly invasive and resistant zoonotic pathogen.</title>
        <authorList>
            <person name="Chiu C.-H."/>
            <person name="Tang P."/>
            <person name="Chu C."/>
            <person name="Hu S."/>
            <person name="Bao Q."/>
            <person name="Yu J."/>
            <person name="Chou Y.-Y."/>
            <person name="Wang H.-S."/>
            <person name="Lee Y.-S."/>
        </authorList>
    </citation>
    <scope>NUCLEOTIDE SEQUENCE [LARGE SCALE GENOMIC DNA]</scope>
    <source>
        <strain>SC-B67</strain>
    </source>
</reference>
<comment type="function">
    <text evidence="1">An accessory protein needed during the final step in the assembly of 30S ribosomal subunit, possibly for assembly of the head region. Essential for efficient processing of 16S rRNA. May be needed both before and after RbfA during the maturation of 16S rRNA. It has affinity for free ribosomal 30S subunits but not for 70S ribosomes.</text>
</comment>
<comment type="subunit">
    <text evidence="1">Binds ribosomal protein uS19.</text>
</comment>
<comment type="subcellular location">
    <subcellularLocation>
        <location evidence="1">Cytoplasm</location>
    </subcellularLocation>
</comment>
<comment type="domain">
    <text evidence="1">The PRC barrel domain binds ribosomal protein uS19.</text>
</comment>
<comment type="similarity">
    <text evidence="1">Belongs to the RimM family.</text>
</comment>
<name>RIMM_SALCH</name>
<accession>Q57L30</accession>
<organism>
    <name type="scientific">Salmonella choleraesuis (strain SC-B67)</name>
    <dbReference type="NCBI Taxonomy" id="321314"/>
    <lineage>
        <taxon>Bacteria</taxon>
        <taxon>Pseudomonadati</taxon>
        <taxon>Pseudomonadota</taxon>
        <taxon>Gammaproteobacteria</taxon>
        <taxon>Enterobacterales</taxon>
        <taxon>Enterobacteriaceae</taxon>
        <taxon>Salmonella</taxon>
    </lineage>
</organism>
<dbReference type="EMBL" id="AE017220">
    <property type="protein sequence ID" value="AAX66582.1"/>
    <property type="molecule type" value="Genomic_DNA"/>
</dbReference>
<dbReference type="SMR" id="Q57L30"/>
<dbReference type="KEGG" id="sec:SCH_2676"/>
<dbReference type="HOGENOM" id="CLU_077636_1_0_6"/>
<dbReference type="Proteomes" id="UP000000538">
    <property type="component" value="Chromosome"/>
</dbReference>
<dbReference type="GO" id="GO:0005737">
    <property type="term" value="C:cytoplasm"/>
    <property type="evidence" value="ECO:0007669"/>
    <property type="project" value="UniProtKB-SubCell"/>
</dbReference>
<dbReference type="GO" id="GO:0005840">
    <property type="term" value="C:ribosome"/>
    <property type="evidence" value="ECO:0007669"/>
    <property type="project" value="InterPro"/>
</dbReference>
<dbReference type="GO" id="GO:0043022">
    <property type="term" value="F:ribosome binding"/>
    <property type="evidence" value="ECO:0007669"/>
    <property type="project" value="InterPro"/>
</dbReference>
<dbReference type="GO" id="GO:0042274">
    <property type="term" value="P:ribosomal small subunit biogenesis"/>
    <property type="evidence" value="ECO:0007669"/>
    <property type="project" value="UniProtKB-UniRule"/>
</dbReference>
<dbReference type="GO" id="GO:0006364">
    <property type="term" value="P:rRNA processing"/>
    <property type="evidence" value="ECO:0007669"/>
    <property type="project" value="UniProtKB-UniRule"/>
</dbReference>
<dbReference type="FunFam" id="2.30.30.240:FF:000001">
    <property type="entry name" value="Ribosome maturation factor RimM"/>
    <property type="match status" value="1"/>
</dbReference>
<dbReference type="FunFam" id="2.40.30.60:FF:000001">
    <property type="entry name" value="Ribosome maturation factor RimM"/>
    <property type="match status" value="1"/>
</dbReference>
<dbReference type="Gene3D" id="2.30.30.240">
    <property type="entry name" value="PRC-barrel domain"/>
    <property type="match status" value="1"/>
</dbReference>
<dbReference type="Gene3D" id="2.40.30.60">
    <property type="entry name" value="RimM"/>
    <property type="match status" value="1"/>
</dbReference>
<dbReference type="HAMAP" id="MF_00014">
    <property type="entry name" value="Ribosome_mat_RimM"/>
    <property type="match status" value="1"/>
</dbReference>
<dbReference type="InterPro" id="IPR011033">
    <property type="entry name" value="PRC_barrel-like_sf"/>
</dbReference>
<dbReference type="InterPro" id="IPR056792">
    <property type="entry name" value="PRC_RimM"/>
</dbReference>
<dbReference type="InterPro" id="IPR011961">
    <property type="entry name" value="RimM"/>
</dbReference>
<dbReference type="InterPro" id="IPR002676">
    <property type="entry name" value="RimM_N"/>
</dbReference>
<dbReference type="InterPro" id="IPR036976">
    <property type="entry name" value="RimM_N_sf"/>
</dbReference>
<dbReference type="InterPro" id="IPR009000">
    <property type="entry name" value="Transl_B-barrel_sf"/>
</dbReference>
<dbReference type="NCBIfam" id="TIGR02273">
    <property type="entry name" value="16S_RimM"/>
    <property type="match status" value="1"/>
</dbReference>
<dbReference type="PANTHER" id="PTHR33692">
    <property type="entry name" value="RIBOSOME MATURATION FACTOR RIMM"/>
    <property type="match status" value="1"/>
</dbReference>
<dbReference type="PANTHER" id="PTHR33692:SF1">
    <property type="entry name" value="RIBOSOME MATURATION FACTOR RIMM"/>
    <property type="match status" value="1"/>
</dbReference>
<dbReference type="Pfam" id="PF24986">
    <property type="entry name" value="PRC_RimM"/>
    <property type="match status" value="1"/>
</dbReference>
<dbReference type="Pfam" id="PF01782">
    <property type="entry name" value="RimM"/>
    <property type="match status" value="1"/>
</dbReference>
<dbReference type="SUPFAM" id="SSF50346">
    <property type="entry name" value="PRC-barrel domain"/>
    <property type="match status" value="1"/>
</dbReference>
<dbReference type="SUPFAM" id="SSF50447">
    <property type="entry name" value="Translation proteins"/>
    <property type="match status" value="1"/>
</dbReference>
<proteinExistence type="inferred from homology"/>
<feature type="chain" id="PRO_0000244165" description="Ribosome maturation factor RimM">
    <location>
        <begin position="1"/>
        <end position="183"/>
    </location>
</feature>
<feature type="domain" description="PRC barrel" evidence="1">
    <location>
        <begin position="104"/>
        <end position="183"/>
    </location>
</feature>